<reference key="1">
    <citation type="submission" date="2007-06" db="EMBL/GenBank/DDBJ databases">
        <title>Complete sequence of Sinorhizobium medicae WSM419 chromosome.</title>
        <authorList>
            <consortium name="US DOE Joint Genome Institute"/>
            <person name="Copeland A."/>
            <person name="Lucas S."/>
            <person name="Lapidus A."/>
            <person name="Barry K."/>
            <person name="Glavina del Rio T."/>
            <person name="Dalin E."/>
            <person name="Tice H."/>
            <person name="Pitluck S."/>
            <person name="Chain P."/>
            <person name="Malfatti S."/>
            <person name="Shin M."/>
            <person name="Vergez L."/>
            <person name="Schmutz J."/>
            <person name="Larimer F."/>
            <person name="Land M."/>
            <person name="Hauser L."/>
            <person name="Kyrpides N."/>
            <person name="Mikhailova N."/>
            <person name="Reeve W.G."/>
            <person name="Richardson P."/>
        </authorList>
    </citation>
    <scope>NUCLEOTIDE SEQUENCE [LARGE SCALE GENOMIC DNA]</scope>
    <source>
        <strain>WSM419</strain>
    </source>
</reference>
<name>PNP_SINMW</name>
<dbReference type="EC" id="2.7.7.8" evidence="1"/>
<dbReference type="EMBL" id="CP000738">
    <property type="protein sequence ID" value="ABR62264.1"/>
    <property type="molecule type" value="Genomic_DNA"/>
</dbReference>
<dbReference type="RefSeq" id="WP_012067644.1">
    <property type="nucleotide sequence ID" value="NC_009636.1"/>
</dbReference>
<dbReference type="RefSeq" id="YP_001329099.1">
    <property type="nucleotide sequence ID" value="NC_009636.1"/>
</dbReference>
<dbReference type="SMR" id="A6UF34"/>
<dbReference type="STRING" id="366394.Smed_3446"/>
<dbReference type="GeneID" id="61610997"/>
<dbReference type="KEGG" id="smd:Smed_3446"/>
<dbReference type="PATRIC" id="fig|366394.8.peg.6696"/>
<dbReference type="eggNOG" id="COG1185">
    <property type="taxonomic scope" value="Bacteria"/>
</dbReference>
<dbReference type="HOGENOM" id="CLU_004217_2_2_5"/>
<dbReference type="OrthoDB" id="9804305at2"/>
<dbReference type="Proteomes" id="UP000001108">
    <property type="component" value="Chromosome"/>
</dbReference>
<dbReference type="GO" id="GO:0005829">
    <property type="term" value="C:cytosol"/>
    <property type="evidence" value="ECO:0007669"/>
    <property type="project" value="TreeGrafter"/>
</dbReference>
<dbReference type="GO" id="GO:0000175">
    <property type="term" value="F:3'-5'-RNA exonuclease activity"/>
    <property type="evidence" value="ECO:0007669"/>
    <property type="project" value="TreeGrafter"/>
</dbReference>
<dbReference type="GO" id="GO:0000287">
    <property type="term" value="F:magnesium ion binding"/>
    <property type="evidence" value="ECO:0007669"/>
    <property type="project" value="UniProtKB-UniRule"/>
</dbReference>
<dbReference type="GO" id="GO:0004654">
    <property type="term" value="F:polyribonucleotide nucleotidyltransferase activity"/>
    <property type="evidence" value="ECO:0007669"/>
    <property type="project" value="UniProtKB-UniRule"/>
</dbReference>
<dbReference type="GO" id="GO:0003723">
    <property type="term" value="F:RNA binding"/>
    <property type="evidence" value="ECO:0007669"/>
    <property type="project" value="UniProtKB-UniRule"/>
</dbReference>
<dbReference type="GO" id="GO:0006402">
    <property type="term" value="P:mRNA catabolic process"/>
    <property type="evidence" value="ECO:0007669"/>
    <property type="project" value="UniProtKB-UniRule"/>
</dbReference>
<dbReference type="GO" id="GO:0006396">
    <property type="term" value="P:RNA processing"/>
    <property type="evidence" value="ECO:0007669"/>
    <property type="project" value="InterPro"/>
</dbReference>
<dbReference type="CDD" id="cd02393">
    <property type="entry name" value="KH-I_PNPase"/>
    <property type="match status" value="1"/>
</dbReference>
<dbReference type="CDD" id="cd11363">
    <property type="entry name" value="RNase_PH_PNPase_1"/>
    <property type="match status" value="1"/>
</dbReference>
<dbReference type="CDD" id="cd11364">
    <property type="entry name" value="RNase_PH_PNPase_2"/>
    <property type="match status" value="1"/>
</dbReference>
<dbReference type="CDD" id="cd04472">
    <property type="entry name" value="S1_PNPase"/>
    <property type="match status" value="1"/>
</dbReference>
<dbReference type="FunFam" id="2.40.50.140:FF:000107">
    <property type="entry name" value="Polyribonucleotide nucleotidyltransferase"/>
    <property type="match status" value="1"/>
</dbReference>
<dbReference type="FunFam" id="3.30.1370.10:FF:000001">
    <property type="entry name" value="Polyribonucleotide nucleotidyltransferase"/>
    <property type="match status" value="1"/>
</dbReference>
<dbReference type="FunFam" id="3.30.230.70:FF:000001">
    <property type="entry name" value="Polyribonucleotide nucleotidyltransferase"/>
    <property type="match status" value="1"/>
</dbReference>
<dbReference type="FunFam" id="3.30.230.70:FF:000002">
    <property type="entry name" value="Polyribonucleotide nucleotidyltransferase"/>
    <property type="match status" value="1"/>
</dbReference>
<dbReference type="Gene3D" id="3.30.230.70">
    <property type="entry name" value="GHMP Kinase, N-terminal domain"/>
    <property type="match status" value="2"/>
</dbReference>
<dbReference type="Gene3D" id="3.30.1370.10">
    <property type="entry name" value="K Homology domain, type 1"/>
    <property type="match status" value="1"/>
</dbReference>
<dbReference type="Gene3D" id="2.40.50.140">
    <property type="entry name" value="Nucleic acid-binding proteins"/>
    <property type="match status" value="1"/>
</dbReference>
<dbReference type="HAMAP" id="MF_01595">
    <property type="entry name" value="PNPase"/>
    <property type="match status" value="1"/>
</dbReference>
<dbReference type="InterPro" id="IPR001247">
    <property type="entry name" value="ExoRNase_PH_dom1"/>
</dbReference>
<dbReference type="InterPro" id="IPR015847">
    <property type="entry name" value="ExoRNase_PH_dom2"/>
</dbReference>
<dbReference type="InterPro" id="IPR036345">
    <property type="entry name" value="ExoRNase_PH_dom2_sf"/>
</dbReference>
<dbReference type="InterPro" id="IPR004087">
    <property type="entry name" value="KH_dom"/>
</dbReference>
<dbReference type="InterPro" id="IPR004088">
    <property type="entry name" value="KH_dom_type_1"/>
</dbReference>
<dbReference type="InterPro" id="IPR036612">
    <property type="entry name" value="KH_dom_type_1_sf"/>
</dbReference>
<dbReference type="InterPro" id="IPR012340">
    <property type="entry name" value="NA-bd_OB-fold"/>
</dbReference>
<dbReference type="InterPro" id="IPR012162">
    <property type="entry name" value="PNPase"/>
</dbReference>
<dbReference type="InterPro" id="IPR027408">
    <property type="entry name" value="PNPase/RNase_PH_dom_sf"/>
</dbReference>
<dbReference type="InterPro" id="IPR015848">
    <property type="entry name" value="PNPase_PH_RNA-bd_bac/org-type"/>
</dbReference>
<dbReference type="InterPro" id="IPR020568">
    <property type="entry name" value="Ribosomal_Su5_D2-typ_SF"/>
</dbReference>
<dbReference type="InterPro" id="IPR003029">
    <property type="entry name" value="S1_domain"/>
</dbReference>
<dbReference type="NCBIfam" id="TIGR03591">
    <property type="entry name" value="polynuc_phos"/>
    <property type="match status" value="1"/>
</dbReference>
<dbReference type="NCBIfam" id="NF008805">
    <property type="entry name" value="PRK11824.1"/>
    <property type="match status" value="1"/>
</dbReference>
<dbReference type="PANTHER" id="PTHR11252">
    <property type="entry name" value="POLYRIBONUCLEOTIDE NUCLEOTIDYLTRANSFERASE"/>
    <property type="match status" value="1"/>
</dbReference>
<dbReference type="PANTHER" id="PTHR11252:SF0">
    <property type="entry name" value="POLYRIBONUCLEOTIDE NUCLEOTIDYLTRANSFERASE 1, MITOCHONDRIAL"/>
    <property type="match status" value="1"/>
</dbReference>
<dbReference type="Pfam" id="PF00013">
    <property type="entry name" value="KH_1"/>
    <property type="match status" value="1"/>
</dbReference>
<dbReference type="Pfam" id="PF03726">
    <property type="entry name" value="PNPase"/>
    <property type="match status" value="1"/>
</dbReference>
<dbReference type="Pfam" id="PF01138">
    <property type="entry name" value="RNase_PH"/>
    <property type="match status" value="2"/>
</dbReference>
<dbReference type="Pfam" id="PF03725">
    <property type="entry name" value="RNase_PH_C"/>
    <property type="match status" value="2"/>
</dbReference>
<dbReference type="Pfam" id="PF00575">
    <property type="entry name" value="S1"/>
    <property type="match status" value="1"/>
</dbReference>
<dbReference type="PIRSF" id="PIRSF005499">
    <property type="entry name" value="PNPase"/>
    <property type="match status" value="1"/>
</dbReference>
<dbReference type="SMART" id="SM00322">
    <property type="entry name" value="KH"/>
    <property type="match status" value="1"/>
</dbReference>
<dbReference type="SMART" id="SM00316">
    <property type="entry name" value="S1"/>
    <property type="match status" value="1"/>
</dbReference>
<dbReference type="SUPFAM" id="SSF54791">
    <property type="entry name" value="Eukaryotic type KH-domain (KH-domain type I)"/>
    <property type="match status" value="1"/>
</dbReference>
<dbReference type="SUPFAM" id="SSF50249">
    <property type="entry name" value="Nucleic acid-binding proteins"/>
    <property type="match status" value="1"/>
</dbReference>
<dbReference type="SUPFAM" id="SSF55666">
    <property type="entry name" value="Ribonuclease PH domain 2-like"/>
    <property type="match status" value="2"/>
</dbReference>
<dbReference type="SUPFAM" id="SSF54211">
    <property type="entry name" value="Ribosomal protein S5 domain 2-like"/>
    <property type="match status" value="2"/>
</dbReference>
<dbReference type="PROSITE" id="PS50084">
    <property type="entry name" value="KH_TYPE_1"/>
    <property type="match status" value="1"/>
</dbReference>
<dbReference type="PROSITE" id="PS50126">
    <property type="entry name" value="S1"/>
    <property type="match status" value="1"/>
</dbReference>
<gene>
    <name evidence="1" type="primary">pnp</name>
    <name type="ordered locus">Smed_3446</name>
</gene>
<feature type="chain" id="PRO_0000329855" description="Polyribonucleotide nucleotidyltransferase">
    <location>
        <begin position="1"/>
        <end position="714"/>
    </location>
</feature>
<feature type="domain" description="KH" evidence="1">
    <location>
        <begin position="555"/>
        <end position="614"/>
    </location>
</feature>
<feature type="domain" description="S1 motif" evidence="1">
    <location>
        <begin position="624"/>
        <end position="692"/>
    </location>
</feature>
<feature type="binding site" evidence="1">
    <location>
        <position position="488"/>
    </location>
    <ligand>
        <name>Mg(2+)</name>
        <dbReference type="ChEBI" id="CHEBI:18420"/>
    </ligand>
</feature>
<feature type="binding site" evidence="1">
    <location>
        <position position="494"/>
    </location>
    <ligand>
        <name>Mg(2+)</name>
        <dbReference type="ChEBI" id="CHEBI:18420"/>
    </ligand>
</feature>
<proteinExistence type="inferred from homology"/>
<organism>
    <name type="scientific">Sinorhizobium medicae (strain WSM419)</name>
    <name type="common">Ensifer medicae</name>
    <dbReference type="NCBI Taxonomy" id="366394"/>
    <lineage>
        <taxon>Bacteria</taxon>
        <taxon>Pseudomonadati</taxon>
        <taxon>Pseudomonadota</taxon>
        <taxon>Alphaproteobacteria</taxon>
        <taxon>Hyphomicrobiales</taxon>
        <taxon>Rhizobiaceae</taxon>
        <taxon>Sinorhizobium/Ensifer group</taxon>
        <taxon>Sinorhizobium</taxon>
    </lineage>
</organism>
<comment type="function">
    <text evidence="1">Involved in mRNA degradation. Catalyzes the phosphorolysis of single-stranded polyribonucleotides processively in the 3'- to 5'-direction.</text>
</comment>
<comment type="catalytic activity">
    <reaction evidence="1">
        <text>RNA(n+1) + phosphate = RNA(n) + a ribonucleoside 5'-diphosphate</text>
        <dbReference type="Rhea" id="RHEA:22096"/>
        <dbReference type="Rhea" id="RHEA-COMP:14527"/>
        <dbReference type="Rhea" id="RHEA-COMP:17342"/>
        <dbReference type="ChEBI" id="CHEBI:43474"/>
        <dbReference type="ChEBI" id="CHEBI:57930"/>
        <dbReference type="ChEBI" id="CHEBI:140395"/>
        <dbReference type="EC" id="2.7.7.8"/>
    </reaction>
</comment>
<comment type="cofactor">
    <cofactor evidence="1">
        <name>Mg(2+)</name>
        <dbReference type="ChEBI" id="CHEBI:18420"/>
    </cofactor>
</comment>
<comment type="subcellular location">
    <subcellularLocation>
        <location evidence="1">Cytoplasm</location>
    </subcellularLocation>
</comment>
<comment type="similarity">
    <text evidence="1">Belongs to the polyribonucleotide nucleotidyltransferase family.</text>
</comment>
<keyword id="KW-0963">Cytoplasm</keyword>
<keyword id="KW-0460">Magnesium</keyword>
<keyword id="KW-0479">Metal-binding</keyword>
<keyword id="KW-0548">Nucleotidyltransferase</keyword>
<keyword id="KW-0694">RNA-binding</keyword>
<keyword id="KW-0808">Transferase</keyword>
<accession>A6UF34</accession>
<protein>
    <recommendedName>
        <fullName evidence="1">Polyribonucleotide nucleotidyltransferase</fullName>
        <ecNumber evidence="1">2.7.7.8</ecNumber>
    </recommendedName>
    <alternativeName>
        <fullName evidence="1">Polynucleotide phosphorylase</fullName>
        <shortName evidence="1">PNPase</shortName>
    </alternativeName>
</protein>
<evidence type="ECO:0000255" key="1">
    <source>
        <dbReference type="HAMAP-Rule" id="MF_01595"/>
    </source>
</evidence>
<sequence length="714" mass="77456">MFETHKVEIEWAGRPLKLETGKIARQADGAVLATYGETVVLATVVSAKAPKPGQDFFPLTVNYQEKTYAAGKIPGGYFKREGRPSENETLVSRLIDRPIRPLFPEGYKNDTQVIITVMQHDLENNPDVVAMVAASAALTLSGVPFMGPVGGARVGYINGEYVLNPHLDEMDESTLDLVVAGTQDAVLMVESEAKELSEEIMLGAVVFGQKGFQPVIDAVIRLAEVAAKEPREFEPDDHSALENAMLSIAEEDLRKAYKITEKAQRYAAVDAVKAKVKEHFLPEGVENPAHTAEEIASVFKHLQAKIVRWNILDTKSRIDGRDLVTVRPIVAEVGLLPRTHGSALFTRGETQAIVVATLGTGEDEQYVDSLTGMYKENFMLHYNFPPYSVGETGRMGSPGRREIGHGKLAWRAIHPMLPTAEQFPYTLRVVSEITESNGSSSMATVCGTSLALMDAGVPLAKPVAGIAMGLIKEDDRFAVLSDILGDEDHLGDMDFKVAGTEAGVTSLQMDIKIAGITEEIMKVALDQAKHGRVHILGEMAKAISESRGQLGEFAPRIEVMNIPVDKIREVIGSGGKVIREIVEKTGAKINIDDDGTVKIASASGKEIEAARKWIHSIVAEPEVGQVYEGTVVKTADFGAFVNFFGARDGLVHISQLASERVAKTTDVVKEGDKVWVKLMGFDERGKVRLSMKVVDQATGKEIAAEKKDGGEAAE</sequence>